<sequence length="252" mass="27591">MAADETSTDFGFARVPLDEKQGRVNEVFRSVARRYDVMNDLMSGGLHRAWKSALISALRPSRTRPFRLLDVAGGTGDIAFRALQAGGPETHVTVLDINDAMLAVGRERAGDRFAGRIDFVAGNAEALPLPDGSFDAYTIAFGIRNVPRIERALAEAYRVLQPGGRFLCLEFSHVDVPGLDRIYDAYSFRIIPHLGALVAGDRESYRYLVESIRRFPTPGAFAGMIEEAGFAHVTHRLLSGGICAIHSGWKIA</sequence>
<organism>
    <name type="scientific">Methylobacterium nodulans (strain LMG 21967 / CNCM I-2342 / ORS 2060)</name>
    <dbReference type="NCBI Taxonomy" id="460265"/>
    <lineage>
        <taxon>Bacteria</taxon>
        <taxon>Pseudomonadati</taxon>
        <taxon>Pseudomonadota</taxon>
        <taxon>Alphaproteobacteria</taxon>
        <taxon>Hyphomicrobiales</taxon>
        <taxon>Methylobacteriaceae</taxon>
        <taxon>Methylobacterium</taxon>
    </lineage>
</organism>
<proteinExistence type="inferred from homology"/>
<keyword id="KW-0474">Menaquinone biosynthesis</keyword>
<keyword id="KW-0489">Methyltransferase</keyword>
<keyword id="KW-1185">Reference proteome</keyword>
<keyword id="KW-0949">S-adenosyl-L-methionine</keyword>
<keyword id="KW-0808">Transferase</keyword>
<keyword id="KW-0831">Ubiquinone biosynthesis</keyword>
<gene>
    <name evidence="1" type="primary">ubiE</name>
    <name type="ordered locus">Mnod_7055</name>
</gene>
<protein>
    <recommendedName>
        <fullName evidence="1">Ubiquinone/menaquinone biosynthesis C-methyltransferase UbiE</fullName>
        <ecNumber evidence="1">2.1.1.163</ecNumber>
        <ecNumber evidence="1">2.1.1.201</ecNumber>
    </recommendedName>
    <alternativeName>
        <fullName evidence="1">2-methoxy-6-polyprenyl-1,4-benzoquinol methylase</fullName>
    </alternativeName>
    <alternativeName>
        <fullName evidence="1">Demethylmenaquinone methyltransferase</fullName>
    </alternativeName>
</protein>
<feature type="chain" id="PRO_1000187777" description="Ubiquinone/menaquinone biosynthesis C-methyltransferase UbiE">
    <location>
        <begin position="1"/>
        <end position="252"/>
    </location>
</feature>
<feature type="binding site" evidence="1">
    <location>
        <position position="75"/>
    </location>
    <ligand>
        <name>S-adenosyl-L-methionine</name>
        <dbReference type="ChEBI" id="CHEBI:59789"/>
    </ligand>
</feature>
<feature type="binding site" evidence="1">
    <location>
        <position position="96"/>
    </location>
    <ligand>
        <name>S-adenosyl-L-methionine</name>
        <dbReference type="ChEBI" id="CHEBI:59789"/>
    </ligand>
</feature>
<feature type="binding site" evidence="1">
    <location>
        <begin position="123"/>
        <end position="124"/>
    </location>
    <ligand>
        <name>S-adenosyl-L-methionine</name>
        <dbReference type="ChEBI" id="CHEBI:59789"/>
    </ligand>
</feature>
<accession>B8IJ00</accession>
<comment type="function">
    <text evidence="1">Methyltransferase required for the conversion of demethylmenaquinol (DMKH2) to menaquinol (MKH2) and the conversion of 2-polyprenyl-6-methoxy-1,4-benzoquinol (DDMQH2) to 2-polyprenyl-3-methyl-6-methoxy-1,4-benzoquinol (DMQH2).</text>
</comment>
<comment type="catalytic activity">
    <reaction evidence="1">
        <text>a 2-demethylmenaquinol + S-adenosyl-L-methionine = a menaquinol + S-adenosyl-L-homocysteine + H(+)</text>
        <dbReference type="Rhea" id="RHEA:42640"/>
        <dbReference type="Rhea" id="RHEA-COMP:9539"/>
        <dbReference type="Rhea" id="RHEA-COMP:9563"/>
        <dbReference type="ChEBI" id="CHEBI:15378"/>
        <dbReference type="ChEBI" id="CHEBI:18151"/>
        <dbReference type="ChEBI" id="CHEBI:55437"/>
        <dbReference type="ChEBI" id="CHEBI:57856"/>
        <dbReference type="ChEBI" id="CHEBI:59789"/>
        <dbReference type="EC" id="2.1.1.163"/>
    </reaction>
</comment>
<comment type="catalytic activity">
    <reaction evidence="1">
        <text>a 2-methoxy-6-(all-trans-polyprenyl)benzene-1,4-diol + S-adenosyl-L-methionine = a 5-methoxy-2-methyl-3-(all-trans-polyprenyl)benzene-1,4-diol + S-adenosyl-L-homocysteine + H(+)</text>
        <dbReference type="Rhea" id="RHEA:28286"/>
        <dbReference type="Rhea" id="RHEA-COMP:10858"/>
        <dbReference type="Rhea" id="RHEA-COMP:10859"/>
        <dbReference type="ChEBI" id="CHEBI:15378"/>
        <dbReference type="ChEBI" id="CHEBI:57856"/>
        <dbReference type="ChEBI" id="CHEBI:59789"/>
        <dbReference type="ChEBI" id="CHEBI:84166"/>
        <dbReference type="ChEBI" id="CHEBI:84167"/>
        <dbReference type="EC" id="2.1.1.201"/>
    </reaction>
</comment>
<comment type="pathway">
    <text evidence="1">Quinol/quinone metabolism; menaquinone biosynthesis; menaquinol from 1,4-dihydroxy-2-naphthoate: step 2/2.</text>
</comment>
<comment type="pathway">
    <text evidence="1">Cofactor biosynthesis; ubiquinone biosynthesis.</text>
</comment>
<comment type="similarity">
    <text evidence="1">Belongs to the class I-like SAM-binding methyltransferase superfamily. MenG/UbiE family.</text>
</comment>
<dbReference type="EC" id="2.1.1.163" evidence="1"/>
<dbReference type="EC" id="2.1.1.201" evidence="1"/>
<dbReference type="EMBL" id="CP001349">
    <property type="protein sequence ID" value="ACL61795.1"/>
    <property type="molecule type" value="Genomic_DNA"/>
</dbReference>
<dbReference type="RefSeq" id="WP_015933358.1">
    <property type="nucleotide sequence ID" value="NC_011894.1"/>
</dbReference>
<dbReference type="SMR" id="B8IJ00"/>
<dbReference type="STRING" id="460265.Mnod_7055"/>
<dbReference type="KEGG" id="mno:Mnod_7055"/>
<dbReference type="eggNOG" id="COG2226">
    <property type="taxonomic scope" value="Bacteria"/>
</dbReference>
<dbReference type="HOGENOM" id="CLU_037990_0_1_5"/>
<dbReference type="UniPathway" id="UPA00079">
    <property type="reaction ID" value="UER00169"/>
</dbReference>
<dbReference type="UniPathway" id="UPA00232"/>
<dbReference type="Proteomes" id="UP000008207">
    <property type="component" value="Chromosome"/>
</dbReference>
<dbReference type="GO" id="GO:0008425">
    <property type="term" value="F:2-methoxy-6-polyprenyl-1,4-benzoquinol methyltransferase activity"/>
    <property type="evidence" value="ECO:0007669"/>
    <property type="project" value="UniProtKB-UniRule"/>
</dbReference>
<dbReference type="GO" id="GO:0043770">
    <property type="term" value="F:demethylmenaquinone methyltransferase activity"/>
    <property type="evidence" value="ECO:0007669"/>
    <property type="project" value="UniProtKB-UniRule"/>
</dbReference>
<dbReference type="GO" id="GO:0009060">
    <property type="term" value="P:aerobic respiration"/>
    <property type="evidence" value="ECO:0007669"/>
    <property type="project" value="UniProtKB-UniRule"/>
</dbReference>
<dbReference type="GO" id="GO:0009234">
    <property type="term" value="P:menaquinone biosynthetic process"/>
    <property type="evidence" value="ECO:0007669"/>
    <property type="project" value="UniProtKB-UniRule"/>
</dbReference>
<dbReference type="GO" id="GO:0032259">
    <property type="term" value="P:methylation"/>
    <property type="evidence" value="ECO:0007669"/>
    <property type="project" value="UniProtKB-KW"/>
</dbReference>
<dbReference type="CDD" id="cd02440">
    <property type="entry name" value="AdoMet_MTases"/>
    <property type="match status" value="1"/>
</dbReference>
<dbReference type="Gene3D" id="3.40.50.150">
    <property type="entry name" value="Vaccinia Virus protein VP39"/>
    <property type="match status" value="1"/>
</dbReference>
<dbReference type="HAMAP" id="MF_01813">
    <property type="entry name" value="MenG_UbiE_methyltr"/>
    <property type="match status" value="1"/>
</dbReference>
<dbReference type="InterPro" id="IPR029063">
    <property type="entry name" value="SAM-dependent_MTases_sf"/>
</dbReference>
<dbReference type="InterPro" id="IPR004033">
    <property type="entry name" value="UbiE/COQ5_MeTrFase"/>
</dbReference>
<dbReference type="InterPro" id="IPR023576">
    <property type="entry name" value="UbiE/COQ5_MeTrFase_CS"/>
</dbReference>
<dbReference type="NCBIfam" id="TIGR01934">
    <property type="entry name" value="MenG_MenH_UbiE"/>
    <property type="match status" value="1"/>
</dbReference>
<dbReference type="NCBIfam" id="NF001242">
    <property type="entry name" value="PRK00216.1-3"/>
    <property type="match status" value="1"/>
</dbReference>
<dbReference type="PANTHER" id="PTHR43591:SF24">
    <property type="entry name" value="2-METHOXY-6-POLYPRENYL-1,4-BENZOQUINOL METHYLASE, MITOCHONDRIAL"/>
    <property type="match status" value="1"/>
</dbReference>
<dbReference type="PANTHER" id="PTHR43591">
    <property type="entry name" value="METHYLTRANSFERASE"/>
    <property type="match status" value="1"/>
</dbReference>
<dbReference type="Pfam" id="PF01209">
    <property type="entry name" value="Ubie_methyltran"/>
    <property type="match status" value="1"/>
</dbReference>
<dbReference type="SUPFAM" id="SSF53335">
    <property type="entry name" value="S-adenosyl-L-methionine-dependent methyltransferases"/>
    <property type="match status" value="1"/>
</dbReference>
<dbReference type="PROSITE" id="PS51608">
    <property type="entry name" value="SAM_MT_UBIE"/>
    <property type="match status" value="1"/>
</dbReference>
<dbReference type="PROSITE" id="PS01183">
    <property type="entry name" value="UBIE_1"/>
    <property type="match status" value="1"/>
</dbReference>
<dbReference type="PROSITE" id="PS01184">
    <property type="entry name" value="UBIE_2"/>
    <property type="match status" value="1"/>
</dbReference>
<reference key="1">
    <citation type="submission" date="2009-01" db="EMBL/GenBank/DDBJ databases">
        <title>Complete sequence of chromosome of Methylobacterium nodulans ORS 2060.</title>
        <authorList>
            <consortium name="US DOE Joint Genome Institute"/>
            <person name="Lucas S."/>
            <person name="Copeland A."/>
            <person name="Lapidus A."/>
            <person name="Glavina del Rio T."/>
            <person name="Dalin E."/>
            <person name="Tice H."/>
            <person name="Bruce D."/>
            <person name="Goodwin L."/>
            <person name="Pitluck S."/>
            <person name="Sims D."/>
            <person name="Brettin T."/>
            <person name="Detter J.C."/>
            <person name="Han C."/>
            <person name="Larimer F."/>
            <person name="Land M."/>
            <person name="Hauser L."/>
            <person name="Kyrpides N."/>
            <person name="Ivanova N."/>
            <person name="Marx C.J."/>
            <person name="Richardson P."/>
        </authorList>
    </citation>
    <scope>NUCLEOTIDE SEQUENCE [LARGE SCALE GENOMIC DNA]</scope>
    <source>
        <strain>LMG 21967 / CNCM I-2342 / ORS 2060</strain>
    </source>
</reference>
<name>UBIE_METNO</name>
<evidence type="ECO:0000255" key="1">
    <source>
        <dbReference type="HAMAP-Rule" id="MF_01813"/>
    </source>
</evidence>